<sequence length="334" mass="36275">MRIVINGFGRIGRLVLRQILKRNSPIEVVAINDLVAGDLLTYLFKYDSTHGSFAPQATFSDGCLVMGERKVHFLAEKDVQKLPWKDLDVDVVVESTGLFVNRDDVAKHLDSGAKRVLITAPAKGDVPTFVMGVNHQQFDPADVIISNASCTTNCLAPLAKVLLDNFGIEEGLMTTVHAATATQSVVDGPSRKDWRGGRGAFQNIIPASTGAAKAVGLCLPELKGKLTGMAFRVPVADVSVVDLTVKLSSATTYEAICEAVKHAANTSMKNIMYYTEEAVVSSDFIGCEYSSVFDAQAGVALNDRFFKLVAWYDNEIGYATRIVDLLEYVQENSK</sequence>
<protein>
    <recommendedName>
        <fullName evidence="1">Glyceraldehyde-3-phosphate dehydrogenase</fullName>
        <shortName evidence="1">GAPDH</shortName>
        <ecNumber evidence="2">1.2.1.12</ecNumber>
    </recommendedName>
    <alternativeName>
        <fullName evidence="1">NAD-dependent glyceraldehyde-3-phosphate dehydrogenase</fullName>
    </alternativeName>
</protein>
<accession>P0CE13</accession>
<accession>O84513</accession>
<accession>Q46450</accession>
<evidence type="ECO:0000250" key="1">
    <source>
        <dbReference type="UniProtKB" id="P00362"/>
    </source>
</evidence>
<evidence type="ECO:0000250" key="2">
    <source>
        <dbReference type="UniProtKB" id="P09124"/>
    </source>
</evidence>
<evidence type="ECO:0000305" key="3"/>
<evidence type="ECO:0007829" key="4">
    <source>
        <dbReference type="PDB" id="6WYC"/>
    </source>
</evidence>
<evidence type="ECO:0007829" key="5">
    <source>
        <dbReference type="PDB" id="6X2E"/>
    </source>
</evidence>
<comment type="function">
    <text evidence="1">Catalyzes the oxidative phosphorylation of glyceraldehyde 3-phosphate (G3P) to 1,3-bisphosphoglycerate (BPG) using the cofactor NAD. The first reaction step involves the formation of a hemiacetal intermediate between G3P and a cysteine residue, and this hemiacetal intermediate is then oxidized to a thioester, with concomitant reduction of NAD to NADH. The reduced NADH is then exchanged with the second NAD, and the thioester is attacked by a nucleophilic inorganic phosphate to produce BPG.</text>
</comment>
<comment type="catalytic activity">
    <reaction evidence="2">
        <text>D-glyceraldehyde 3-phosphate + phosphate + NAD(+) = (2R)-3-phospho-glyceroyl phosphate + NADH + H(+)</text>
        <dbReference type="Rhea" id="RHEA:10300"/>
        <dbReference type="ChEBI" id="CHEBI:15378"/>
        <dbReference type="ChEBI" id="CHEBI:43474"/>
        <dbReference type="ChEBI" id="CHEBI:57540"/>
        <dbReference type="ChEBI" id="CHEBI:57604"/>
        <dbReference type="ChEBI" id="CHEBI:57945"/>
        <dbReference type="ChEBI" id="CHEBI:59776"/>
        <dbReference type="EC" id="1.2.1.12"/>
    </reaction>
</comment>
<comment type="pathway">
    <text evidence="3">Carbohydrate degradation; glycolysis; pyruvate from D-glyceraldehyde 3-phosphate: step 1/5.</text>
</comment>
<comment type="subunit">
    <text evidence="1">Homotetramer.</text>
</comment>
<comment type="subcellular location">
    <subcellularLocation>
        <location evidence="3">Cytoplasm</location>
    </subcellularLocation>
</comment>
<comment type="similarity">
    <text evidence="3">Belongs to the glyceraldehyde-3-phosphate dehydrogenase family.</text>
</comment>
<gene>
    <name type="primary">gap</name>
    <name type="synonym">gapA</name>
    <name type="ordered locus">CT_505</name>
</gene>
<dbReference type="EC" id="1.2.1.12" evidence="2"/>
<dbReference type="EMBL" id="AE001273">
    <property type="protein sequence ID" value="AAC68106.1"/>
    <property type="molecule type" value="Genomic_DNA"/>
</dbReference>
<dbReference type="PIR" id="G71504">
    <property type="entry name" value="G71504"/>
</dbReference>
<dbReference type="RefSeq" id="NP_220020.1">
    <property type="nucleotide sequence ID" value="NC_000117.1"/>
</dbReference>
<dbReference type="RefSeq" id="WP_009871869.1">
    <property type="nucleotide sequence ID" value="NC_000117.1"/>
</dbReference>
<dbReference type="PDB" id="6OK4">
    <property type="method" value="X-ray"/>
    <property type="resolution" value="2.40 A"/>
    <property type="chains" value="A/B/C/D=1-334"/>
</dbReference>
<dbReference type="PDB" id="6WYC">
    <property type="method" value="X-ray"/>
    <property type="resolution" value="1.50 A"/>
    <property type="chains" value="A/B/C/D=1-334"/>
</dbReference>
<dbReference type="PDB" id="6X2E">
    <property type="method" value="X-ray"/>
    <property type="resolution" value="1.80 A"/>
    <property type="chains" value="A/B/C/D=1-334"/>
</dbReference>
<dbReference type="PDBsum" id="6OK4"/>
<dbReference type="PDBsum" id="6WYC"/>
<dbReference type="PDBsum" id="6X2E"/>
<dbReference type="SMR" id="P0CE13"/>
<dbReference type="FunCoup" id="P0CE13">
    <property type="interactions" value="243"/>
</dbReference>
<dbReference type="STRING" id="272561.CT_505"/>
<dbReference type="EnsemblBacteria" id="AAC68106">
    <property type="protein sequence ID" value="AAC68106"/>
    <property type="gene ID" value="CT_505"/>
</dbReference>
<dbReference type="GeneID" id="884280"/>
<dbReference type="KEGG" id="ctr:CT_505"/>
<dbReference type="PATRIC" id="fig|272561.5.peg.549"/>
<dbReference type="HOGENOM" id="CLU_030140_0_3_0"/>
<dbReference type="InParanoid" id="P0CE13"/>
<dbReference type="OrthoDB" id="9803304at2"/>
<dbReference type="UniPathway" id="UPA00109">
    <property type="reaction ID" value="UER00184"/>
</dbReference>
<dbReference type="Proteomes" id="UP000000431">
    <property type="component" value="Chromosome"/>
</dbReference>
<dbReference type="GO" id="GO:0005737">
    <property type="term" value="C:cytoplasm"/>
    <property type="evidence" value="ECO:0007669"/>
    <property type="project" value="UniProtKB-SubCell"/>
</dbReference>
<dbReference type="GO" id="GO:0004365">
    <property type="term" value="F:glyceraldehyde-3-phosphate dehydrogenase (NAD+) (phosphorylating) activity"/>
    <property type="evidence" value="ECO:0000250"/>
    <property type="project" value="UniProtKB"/>
</dbReference>
<dbReference type="GO" id="GO:0051287">
    <property type="term" value="F:NAD binding"/>
    <property type="evidence" value="ECO:0000250"/>
    <property type="project" value="UniProtKB"/>
</dbReference>
<dbReference type="GO" id="GO:0050661">
    <property type="term" value="F:NADP binding"/>
    <property type="evidence" value="ECO:0007669"/>
    <property type="project" value="InterPro"/>
</dbReference>
<dbReference type="GO" id="GO:0006006">
    <property type="term" value="P:glucose metabolic process"/>
    <property type="evidence" value="ECO:0007669"/>
    <property type="project" value="InterPro"/>
</dbReference>
<dbReference type="GO" id="GO:0006096">
    <property type="term" value="P:glycolytic process"/>
    <property type="evidence" value="ECO:0007669"/>
    <property type="project" value="UniProtKB-UniPathway"/>
</dbReference>
<dbReference type="CDD" id="cd18126">
    <property type="entry name" value="GAPDH_I_C"/>
    <property type="match status" value="1"/>
</dbReference>
<dbReference type="CDD" id="cd05214">
    <property type="entry name" value="GAPDH_I_N"/>
    <property type="match status" value="1"/>
</dbReference>
<dbReference type="FunFam" id="3.30.360.10:FF:000001">
    <property type="entry name" value="Glyceraldehyde-3-phosphate dehydrogenase"/>
    <property type="match status" value="1"/>
</dbReference>
<dbReference type="FunFam" id="3.40.50.720:FF:000001">
    <property type="entry name" value="Glyceraldehyde-3-phosphate dehydrogenase"/>
    <property type="match status" value="1"/>
</dbReference>
<dbReference type="Gene3D" id="3.30.360.10">
    <property type="entry name" value="Dihydrodipicolinate Reductase, domain 2"/>
    <property type="match status" value="1"/>
</dbReference>
<dbReference type="Gene3D" id="3.40.50.720">
    <property type="entry name" value="NAD(P)-binding Rossmann-like Domain"/>
    <property type="match status" value="1"/>
</dbReference>
<dbReference type="InterPro" id="IPR020831">
    <property type="entry name" value="GlycerAld/Erythrose_P_DH"/>
</dbReference>
<dbReference type="InterPro" id="IPR020830">
    <property type="entry name" value="GlycerAld_3-P_DH_AS"/>
</dbReference>
<dbReference type="InterPro" id="IPR020829">
    <property type="entry name" value="GlycerAld_3-P_DH_cat"/>
</dbReference>
<dbReference type="InterPro" id="IPR020828">
    <property type="entry name" value="GlycerAld_3-P_DH_NAD(P)-bd"/>
</dbReference>
<dbReference type="InterPro" id="IPR006424">
    <property type="entry name" value="Glyceraldehyde-3-P_DH_1"/>
</dbReference>
<dbReference type="InterPro" id="IPR036291">
    <property type="entry name" value="NAD(P)-bd_dom_sf"/>
</dbReference>
<dbReference type="NCBIfam" id="TIGR01534">
    <property type="entry name" value="GAPDH-I"/>
    <property type="match status" value="1"/>
</dbReference>
<dbReference type="PANTHER" id="PTHR10836">
    <property type="entry name" value="GLYCERALDEHYDE 3-PHOSPHATE DEHYDROGENASE"/>
    <property type="match status" value="1"/>
</dbReference>
<dbReference type="PANTHER" id="PTHR10836:SF76">
    <property type="entry name" value="GLYCERALDEHYDE-3-PHOSPHATE DEHYDROGENASE-RELATED"/>
    <property type="match status" value="1"/>
</dbReference>
<dbReference type="Pfam" id="PF02800">
    <property type="entry name" value="Gp_dh_C"/>
    <property type="match status" value="1"/>
</dbReference>
<dbReference type="Pfam" id="PF00044">
    <property type="entry name" value="Gp_dh_N"/>
    <property type="match status" value="1"/>
</dbReference>
<dbReference type="PIRSF" id="PIRSF000149">
    <property type="entry name" value="GAP_DH"/>
    <property type="match status" value="1"/>
</dbReference>
<dbReference type="PRINTS" id="PR00078">
    <property type="entry name" value="G3PDHDRGNASE"/>
</dbReference>
<dbReference type="SMART" id="SM00846">
    <property type="entry name" value="Gp_dh_N"/>
    <property type="match status" value="1"/>
</dbReference>
<dbReference type="SUPFAM" id="SSF55347">
    <property type="entry name" value="Glyceraldehyde-3-phosphate dehydrogenase-like, C-terminal domain"/>
    <property type="match status" value="1"/>
</dbReference>
<dbReference type="SUPFAM" id="SSF51735">
    <property type="entry name" value="NAD(P)-binding Rossmann-fold domains"/>
    <property type="match status" value="1"/>
</dbReference>
<dbReference type="PROSITE" id="PS00071">
    <property type="entry name" value="GAPDH"/>
    <property type="match status" value="1"/>
</dbReference>
<keyword id="KW-0002">3D-structure</keyword>
<keyword id="KW-0963">Cytoplasm</keyword>
<keyword id="KW-0324">Glycolysis</keyword>
<keyword id="KW-0520">NAD</keyword>
<keyword id="KW-0547">Nucleotide-binding</keyword>
<keyword id="KW-0560">Oxidoreductase</keyword>
<keyword id="KW-1185">Reference proteome</keyword>
<feature type="chain" id="PRO_0000145643" description="Glyceraldehyde-3-phosphate dehydrogenase">
    <location>
        <begin position="1"/>
        <end position="334"/>
    </location>
</feature>
<feature type="active site" description="Nucleophile" evidence="1">
    <location>
        <position position="150"/>
    </location>
</feature>
<feature type="binding site" evidence="1">
    <location>
        <begin position="10"/>
        <end position="11"/>
    </location>
    <ligand>
        <name>NAD(+)</name>
        <dbReference type="ChEBI" id="CHEBI:57540"/>
    </ligand>
</feature>
<feature type="binding site" evidence="1">
    <location>
        <position position="33"/>
    </location>
    <ligand>
        <name>NAD(+)</name>
        <dbReference type="ChEBI" id="CHEBI:57540"/>
    </ligand>
</feature>
<feature type="binding site" evidence="1">
    <location>
        <position position="77"/>
    </location>
    <ligand>
        <name>NAD(+)</name>
        <dbReference type="ChEBI" id="CHEBI:57540"/>
    </ligand>
</feature>
<feature type="binding site" evidence="1">
    <location>
        <position position="119"/>
    </location>
    <ligand>
        <name>NAD(+)</name>
        <dbReference type="ChEBI" id="CHEBI:57540"/>
    </ligand>
</feature>
<feature type="binding site" evidence="1">
    <location>
        <begin position="149"/>
        <end position="151"/>
    </location>
    <ligand>
        <name>D-glyceraldehyde 3-phosphate</name>
        <dbReference type="ChEBI" id="CHEBI:59776"/>
    </ligand>
</feature>
<feature type="binding site" evidence="1">
    <location>
        <position position="180"/>
    </location>
    <ligand>
        <name>D-glyceraldehyde 3-phosphate</name>
        <dbReference type="ChEBI" id="CHEBI:59776"/>
    </ligand>
</feature>
<feature type="binding site" evidence="1">
    <location>
        <begin position="209"/>
        <end position="210"/>
    </location>
    <ligand>
        <name>D-glyceraldehyde 3-phosphate</name>
        <dbReference type="ChEBI" id="CHEBI:59776"/>
    </ligand>
</feature>
<feature type="binding site" evidence="1">
    <location>
        <position position="232"/>
    </location>
    <ligand>
        <name>D-glyceraldehyde 3-phosphate</name>
        <dbReference type="ChEBI" id="CHEBI:59776"/>
    </ligand>
</feature>
<feature type="binding site" evidence="1">
    <location>
        <position position="314"/>
    </location>
    <ligand>
        <name>NAD(+)</name>
        <dbReference type="ChEBI" id="CHEBI:57540"/>
    </ligand>
</feature>
<feature type="site" description="Activates thiol group during catalysis" evidence="1">
    <location>
        <position position="177"/>
    </location>
</feature>
<feature type="strand" evidence="4">
    <location>
        <begin position="2"/>
        <end position="7"/>
    </location>
</feature>
<feature type="helix" evidence="4">
    <location>
        <begin position="10"/>
        <end position="21"/>
    </location>
</feature>
<feature type="strand" evidence="4">
    <location>
        <begin position="27"/>
        <end position="32"/>
    </location>
</feature>
<feature type="helix" evidence="4">
    <location>
        <begin position="37"/>
        <end position="45"/>
    </location>
</feature>
<feature type="turn" evidence="4">
    <location>
        <begin position="48"/>
        <end position="50"/>
    </location>
</feature>
<feature type="strand" evidence="4">
    <location>
        <begin position="58"/>
        <end position="60"/>
    </location>
</feature>
<feature type="strand" evidence="4">
    <location>
        <begin position="63"/>
        <end position="66"/>
    </location>
</feature>
<feature type="strand" evidence="4">
    <location>
        <begin position="69"/>
        <end position="74"/>
    </location>
</feature>
<feature type="helix" evidence="4">
    <location>
        <begin position="79"/>
        <end position="81"/>
    </location>
</feature>
<feature type="turn" evidence="4">
    <location>
        <begin position="84"/>
        <end position="88"/>
    </location>
</feature>
<feature type="strand" evidence="4">
    <location>
        <begin position="90"/>
        <end position="94"/>
    </location>
</feature>
<feature type="strand" evidence="4">
    <location>
        <begin position="96"/>
        <end position="98"/>
    </location>
</feature>
<feature type="helix" evidence="4">
    <location>
        <begin position="102"/>
        <end position="105"/>
    </location>
</feature>
<feature type="helix" evidence="4">
    <location>
        <begin position="107"/>
        <end position="110"/>
    </location>
</feature>
<feature type="strand" evidence="4">
    <location>
        <begin position="114"/>
        <end position="120"/>
    </location>
</feature>
<feature type="strand" evidence="4">
    <location>
        <begin position="123"/>
        <end position="125"/>
    </location>
</feature>
<feature type="turn" evidence="4">
    <location>
        <begin position="131"/>
        <end position="133"/>
    </location>
</feature>
<feature type="helix" evidence="4">
    <location>
        <begin position="135"/>
        <end position="137"/>
    </location>
</feature>
<feature type="strand" evidence="4">
    <location>
        <begin position="144"/>
        <end position="146"/>
    </location>
</feature>
<feature type="helix" evidence="4">
    <location>
        <begin position="150"/>
        <end position="165"/>
    </location>
</feature>
<feature type="strand" evidence="4">
    <location>
        <begin position="168"/>
        <end position="178"/>
    </location>
</feature>
<feature type="strand" evidence="4">
    <location>
        <begin position="185"/>
        <end position="187"/>
    </location>
</feature>
<feature type="helix" evidence="4">
    <location>
        <begin position="194"/>
        <end position="197"/>
    </location>
</feature>
<feature type="turn" evidence="5">
    <location>
        <begin position="200"/>
        <end position="202"/>
    </location>
</feature>
<feature type="strand" evidence="4">
    <location>
        <begin position="205"/>
        <end position="207"/>
    </location>
</feature>
<feature type="helix" evidence="4">
    <location>
        <begin position="211"/>
        <end position="218"/>
    </location>
</feature>
<feature type="helix" evidence="4">
    <location>
        <begin position="220"/>
        <end position="222"/>
    </location>
</feature>
<feature type="strand" evidence="4">
    <location>
        <begin position="225"/>
        <end position="234"/>
    </location>
</feature>
<feature type="strand" evidence="4">
    <location>
        <begin position="239"/>
        <end position="249"/>
    </location>
</feature>
<feature type="helix" evidence="4">
    <location>
        <begin position="253"/>
        <end position="265"/>
    </location>
</feature>
<feature type="turn" evidence="4">
    <location>
        <begin position="266"/>
        <end position="271"/>
    </location>
</feature>
<feature type="strand" evidence="4">
    <location>
        <begin position="272"/>
        <end position="275"/>
    </location>
</feature>
<feature type="helix" evidence="4">
    <location>
        <begin position="281"/>
        <end position="284"/>
    </location>
</feature>
<feature type="strand" evidence="4">
    <location>
        <begin position="290"/>
        <end position="294"/>
    </location>
</feature>
<feature type="turn" evidence="4">
    <location>
        <begin position="295"/>
        <end position="297"/>
    </location>
</feature>
<feature type="strand" evidence="4">
    <location>
        <begin position="299"/>
        <end position="312"/>
    </location>
</feature>
<feature type="helix" evidence="4">
    <location>
        <begin position="316"/>
        <end position="331"/>
    </location>
</feature>
<proteinExistence type="evidence at protein level"/>
<organism>
    <name type="scientific">Chlamydia trachomatis serovar D (strain ATCC VR-885 / DSM 19411 / UW-3/Cx)</name>
    <dbReference type="NCBI Taxonomy" id="272561"/>
    <lineage>
        <taxon>Bacteria</taxon>
        <taxon>Pseudomonadati</taxon>
        <taxon>Chlamydiota</taxon>
        <taxon>Chlamydiia</taxon>
        <taxon>Chlamydiales</taxon>
        <taxon>Chlamydiaceae</taxon>
        <taxon>Chlamydia/Chlamydophila group</taxon>
        <taxon>Chlamydia</taxon>
    </lineage>
</organism>
<name>G3P_CHLTR</name>
<reference key="1">
    <citation type="journal article" date="1998" name="Science">
        <title>Genome sequence of an obligate intracellular pathogen of humans: Chlamydia trachomatis.</title>
        <authorList>
            <person name="Stephens R.S."/>
            <person name="Kalman S."/>
            <person name="Lammel C.J."/>
            <person name="Fan J."/>
            <person name="Marathe R."/>
            <person name="Aravind L."/>
            <person name="Mitchell W.P."/>
            <person name="Olinger L."/>
            <person name="Tatusov R.L."/>
            <person name="Zhao Q."/>
            <person name="Koonin E.V."/>
            <person name="Davis R.W."/>
        </authorList>
    </citation>
    <scope>NUCLEOTIDE SEQUENCE [LARGE SCALE GENOMIC DNA]</scope>
    <source>
        <strain>ATCC VR-885 / DSM 19411 / UW-3/Cx</strain>
    </source>
</reference>